<protein>
    <recommendedName>
        <fullName>Ubiquitin-conjugating enzyme E2-34 kDa</fullName>
        <ecNumber>2.3.2.23</ecNumber>
    </recommendedName>
    <alternativeName>
        <fullName>Cell division control protein 34</fullName>
    </alternativeName>
    <alternativeName>
        <fullName>E2 ubiquitin-conjugating enzyme 3</fullName>
    </alternativeName>
    <alternativeName>
        <fullName>E3 ubiquitin ligase complex SCF subunit CDC34</fullName>
    </alternativeName>
    <alternativeName>
        <fullName>Ubiquitin carrier protein</fullName>
    </alternativeName>
    <alternativeName>
        <fullName>Ubiquitin-protein ligase</fullName>
    </alternativeName>
</protein>
<name>UBC3_YEAST</name>
<comment type="function">
    <text>Catalyzes the covalent attachment of ubiquitin to other proteins. Capable, in vitro, to ubiquitinate histone H2A.</text>
</comment>
<comment type="function">
    <text>Mediates the initiation of DNA replication (transition of G1 to S phase in cell cycle). Essential component of the E3 ubiquitin ligase complex SCF (SKP1-CUL1-F-box protein), which mediates the ubiquitination and subsequent proteasomal degradation of target proteins. Involved in the regulation of methionine biosynthesis genes and in the degradation of CDC6 together with CDC4 and CDC53.</text>
</comment>
<comment type="catalytic activity">
    <reaction evidence="1 2">
        <text>S-ubiquitinyl-[E1 ubiquitin-activating enzyme]-L-cysteine + [E2 ubiquitin-conjugating enzyme]-L-cysteine = [E1 ubiquitin-activating enzyme]-L-cysteine + S-ubiquitinyl-[E2 ubiquitin-conjugating enzyme]-L-cysteine.</text>
        <dbReference type="EC" id="2.3.2.23"/>
    </reaction>
</comment>
<comment type="pathway">
    <text evidence="1">Protein modification; protein ubiquitination.</text>
</comment>
<comment type="subunit">
    <text evidence="4 7">Interacts with CDC53. Component of the E3 ubiquitin ligase complexes SCF with CDC53, SKP1/CBF3D, HRT1 and some F-box proteins like MET30 and CDC4.</text>
</comment>
<comment type="interaction">
    <interactant intactId="EBI-19730">
        <id>P14682</id>
    </interactant>
    <interactant intactId="EBI-4321">
        <id>Q12018</id>
        <label>CDC53</label>
    </interactant>
    <organismsDiffer>false</organismsDiffer>
    <experiments>4</experiments>
</comment>
<comment type="interaction">
    <interactant intactId="EBI-19730">
        <id>P14682</id>
    </interactant>
    <interactant intactId="EBI-25861">
        <id>P47050</id>
        <label>RTT101</label>
    </interactant>
    <organismsDiffer>false</organismsDiffer>
    <experiments>2</experiments>
</comment>
<comment type="subcellular location">
    <subcellularLocation>
        <location evidence="5">Cytoplasm</location>
    </subcellularLocation>
    <subcellularLocation>
        <location evidence="5">Nucleus</location>
    </subcellularLocation>
</comment>
<comment type="domain">
    <text>The acidic C-terminal extension is essential for the cell cycle function.</text>
</comment>
<comment type="miscellaneous">
    <text evidence="6">Present with 8170 molecules/cell in log phase SD medium.</text>
</comment>
<comment type="similarity">
    <text evidence="1">Belongs to the ubiquitin-conjugating enzyme family.</text>
</comment>
<evidence type="ECO:0000255" key="1">
    <source>
        <dbReference type="PROSITE-ProRule" id="PRU00388"/>
    </source>
</evidence>
<evidence type="ECO:0000255" key="2">
    <source>
        <dbReference type="PROSITE-ProRule" id="PRU10133"/>
    </source>
</evidence>
<evidence type="ECO:0000256" key="3">
    <source>
        <dbReference type="SAM" id="MobiDB-lite"/>
    </source>
</evidence>
<evidence type="ECO:0000269" key="4">
    <source>
    </source>
</evidence>
<evidence type="ECO:0000269" key="5">
    <source>
    </source>
</evidence>
<evidence type="ECO:0000269" key="6">
    <source>
    </source>
</evidence>
<evidence type="ECO:0000269" key="7">
    <source>
    </source>
</evidence>
<evidence type="ECO:0007744" key="8">
    <source>
    </source>
</evidence>
<evidence type="ECO:0007744" key="9">
    <source>
    </source>
</evidence>
<evidence type="ECO:0007829" key="10">
    <source>
        <dbReference type="PDB" id="6NYD"/>
    </source>
</evidence>
<evidence type="ECO:0007829" key="11">
    <source>
        <dbReference type="PDB" id="6ZHU"/>
    </source>
</evidence>
<feature type="chain" id="PRO_0000082541" description="Ubiquitin-conjugating enzyme E2-34 kDa">
    <location>
        <begin position="1"/>
        <end position="295"/>
    </location>
</feature>
<feature type="domain" description="UBC core" evidence="1">
    <location>
        <begin position="7"/>
        <end position="169"/>
    </location>
</feature>
<feature type="region of interest" description="Disordered" evidence="3">
    <location>
        <begin position="185"/>
        <end position="295"/>
    </location>
</feature>
<feature type="compositionally biased region" description="Basic and acidic residues" evidence="3">
    <location>
        <begin position="189"/>
        <end position="200"/>
    </location>
</feature>
<feature type="compositionally biased region" description="Acidic residues" evidence="3">
    <location>
        <begin position="207"/>
        <end position="226"/>
    </location>
</feature>
<feature type="compositionally biased region" description="Acidic residues" evidence="3">
    <location>
        <begin position="234"/>
        <end position="265"/>
    </location>
</feature>
<feature type="compositionally biased region" description="Basic and acidic residues" evidence="3">
    <location>
        <begin position="269"/>
        <end position="279"/>
    </location>
</feature>
<feature type="active site" description="Glycyl thioester intermediate" evidence="1 2">
    <location>
        <position position="95"/>
    </location>
</feature>
<feature type="modified residue" description="Phosphoserine" evidence="8">
    <location>
        <position position="186"/>
    </location>
</feature>
<feature type="modified residue" description="Phosphoserine" evidence="9">
    <location>
        <position position="282"/>
    </location>
</feature>
<feature type="modified residue" description="Phosphoserine" evidence="8">
    <location>
        <position position="292"/>
    </location>
</feature>
<feature type="helix" evidence="10">
    <location>
        <begin position="4"/>
        <end position="20"/>
    </location>
</feature>
<feature type="turn" evidence="10">
    <location>
        <begin position="22"/>
        <end position="24"/>
    </location>
</feature>
<feature type="strand" evidence="10">
    <location>
        <begin position="29"/>
        <end position="34"/>
    </location>
</feature>
<feature type="turn" evidence="10">
    <location>
        <begin position="35"/>
        <end position="37"/>
    </location>
</feature>
<feature type="strand" evidence="10">
    <location>
        <begin position="38"/>
        <end position="46"/>
    </location>
</feature>
<feature type="strand" evidence="11">
    <location>
        <begin position="51"/>
        <end position="53"/>
    </location>
</feature>
<feature type="turn" evidence="10">
    <location>
        <begin position="54"/>
        <end position="57"/>
    </location>
</feature>
<feature type="strand" evidence="10">
    <location>
        <begin position="60"/>
        <end position="65"/>
    </location>
</feature>
<feature type="turn" evidence="10">
    <location>
        <begin position="68"/>
        <end position="71"/>
    </location>
</feature>
<feature type="strand" evidence="10">
    <location>
        <begin position="76"/>
        <end position="81"/>
    </location>
</feature>
<feature type="strand" evidence="10">
    <location>
        <begin position="92"/>
        <end position="94"/>
    </location>
</feature>
<feature type="helix" evidence="10">
    <location>
        <begin position="97"/>
        <end position="99"/>
    </location>
</feature>
<feature type="helix" evidence="10">
    <location>
        <begin position="121"/>
        <end position="133"/>
    </location>
</feature>
<feature type="strand" evidence="11">
    <location>
        <begin position="137"/>
        <end position="139"/>
    </location>
</feature>
<feature type="helix" evidence="10">
    <location>
        <begin position="143"/>
        <end position="151"/>
    </location>
</feature>
<feature type="helix" evidence="10">
    <location>
        <begin position="153"/>
        <end position="167"/>
    </location>
</feature>
<feature type="helix" evidence="10">
    <location>
        <begin position="168"/>
        <end position="170"/>
    </location>
</feature>
<feature type="strand" evidence="11">
    <location>
        <begin position="171"/>
        <end position="175"/>
    </location>
</feature>
<dbReference type="EC" id="2.3.2.23"/>
<dbReference type="EMBL" id="M21877">
    <property type="protein sequence ID" value="AAA35188.1"/>
    <property type="molecule type" value="Genomic_DNA"/>
</dbReference>
<dbReference type="EMBL" id="X84162">
    <property type="protein sequence ID" value="CAA58970.1"/>
    <property type="molecule type" value="Genomic_DNA"/>
</dbReference>
<dbReference type="EMBL" id="Z74350">
    <property type="protein sequence ID" value="CAA98872.1"/>
    <property type="molecule type" value="Genomic_DNA"/>
</dbReference>
<dbReference type="EMBL" id="Z49209">
    <property type="protein sequence ID" value="CAA89083.1"/>
    <property type="molecule type" value="Genomic_DNA"/>
</dbReference>
<dbReference type="EMBL" id="BK006938">
    <property type="protein sequence ID" value="DAA11900.1"/>
    <property type="molecule type" value="Genomic_DNA"/>
</dbReference>
<dbReference type="PIR" id="A41241">
    <property type="entry name" value="A41241"/>
</dbReference>
<dbReference type="RefSeq" id="NP_010339.1">
    <property type="nucleotide sequence ID" value="NM_001180362.1"/>
</dbReference>
<dbReference type="PDB" id="6NYA">
    <property type="method" value="X-ray"/>
    <property type="resolution" value="2.06 A"/>
    <property type="chains" value="C/F=3-195"/>
</dbReference>
<dbReference type="PDB" id="6NYD">
    <property type="method" value="X-ray"/>
    <property type="resolution" value="1.65 A"/>
    <property type="chains" value="C=3-195"/>
</dbReference>
<dbReference type="PDB" id="6ZHU">
    <property type="method" value="X-ray"/>
    <property type="resolution" value="3.18 A"/>
    <property type="chains" value="B/D/F/H=1-295"/>
</dbReference>
<dbReference type="PDB" id="7K5J">
    <property type="method" value="X-ray"/>
    <property type="resolution" value="3.42 A"/>
    <property type="chains" value="B/E/F/H/J/L/T/V=3-195"/>
</dbReference>
<dbReference type="PDBsum" id="6NYA"/>
<dbReference type="PDBsum" id="6NYD"/>
<dbReference type="PDBsum" id="6ZHU"/>
<dbReference type="PDBsum" id="7K5J"/>
<dbReference type="SMR" id="P14682"/>
<dbReference type="BioGRID" id="32107">
    <property type="interactions" value="468"/>
</dbReference>
<dbReference type="ComplexPortal" id="CPX-3234">
    <property type="entry name" value="SCF-Cdc4 ubiquitin ligase complex"/>
</dbReference>
<dbReference type="ComplexPortal" id="CPX-3241">
    <property type="entry name" value="SCF-Grr1 ubiquitin ligase complex"/>
</dbReference>
<dbReference type="ComplexPortal" id="CPX-3242">
    <property type="entry name" value="SCF-Mdm30 ubiquitin ligase complex"/>
</dbReference>
<dbReference type="ComplexPortal" id="CPX-3243">
    <property type="entry name" value="SCF-Ufo1 ubiquitin ligase complex"/>
</dbReference>
<dbReference type="ComplexPortal" id="CPX-3244">
    <property type="entry name" value="SCF-Das1 ubiquitin ligase complex"/>
</dbReference>
<dbReference type="ComplexPortal" id="CPX-3249">
    <property type="entry name" value="SCF-MET30 E3 ubiquitin ligase complex"/>
</dbReference>
<dbReference type="ComplexPortal" id="CPX-3250">
    <property type="entry name" value="SCF-Dia2 ubiquitin ligase complex"/>
</dbReference>
<dbReference type="ComplexPortal" id="CPX-3253">
    <property type="entry name" value="SCF-Ylr352w ubiquitin ligase complex"/>
</dbReference>
<dbReference type="ComplexPortal" id="CPX-3254">
    <property type="entry name" value="SCF-Saf1 ubiquitin ligase complex"/>
</dbReference>
<dbReference type="ComplexPortal" id="CPX-3255">
    <property type="entry name" value="SCF-Hrt3 ubiquitin ligase complex"/>
</dbReference>
<dbReference type="ComplexPortal" id="CPX-3681">
    <property type="entry name" value="SCF-Ydr131c ubiquitin ligase complex"/>
</dbReference>
<dbReference type="DIP" id="DIP-1618N"/>
<dbReference type="FunCoup" id="P14682">
    <property type="interactions" value="353"/>
</dbReference>
<dbReference type="IntAct" id="P14682">
    <property type="interactions" value="10"/>
</dbReference>
<dbReference type="MINT" id="P14682"/>
<dbReference type="STRING" id="4932.YDR054C"/>
<dbReference type="iPTMnet" id="P14682"/>
<dbReference type="PaxDb" id="4932-YDR054C"/>
<dbReference type="PeptideAtlas" id="P14682"/>
<dbReference type="EnsemblFungi" id="YDR054C_mRNA">
    <property type="protein sequence ID" value="YDR054C"/>
    <property type="gene ID" value="YDR054C"/>
</dbReference>
<dbReference type="GeneID" id="851624"/>
<dbReference type="KEGG" id="sce:YDR054C"/>
<dbReference type="AGR" id="SGD:S000002461"/>
<dbReference type="SGD" id="S000002461">
    <property type="gene designation" value="CDC34"/>
</dbReference>
<dbReference type="VEuPathDB" id="FungiDB:YDR054C"/>
<dbReference type="eggNOG" id="KOG0425">
    <property type="taxonomic scope" value="Eukaryota"/>
</dbReference>
<dbReference type="GeneTree" id="ENSGT00940000167430"/>
<dbReference type="HOGENOM" id="CLU_030988_1_1_1"/>
<dbReference type="InParanoid" id="P14682"/>
<dbReference type="OMA" id="FQAHIKF"/>
<dbReference type="OrthoDB" id="19692at2759"/>
<dbReference type="BioCyc" id="YEAST:G3O-29663-MONOMER"/>
<dbReference type="BRENDA" id="2.3.2.23">
    <property type="organism ID" value="984"/>
</dbReference>
<dbReference type="Reactome" id="R-SCE-8866652">
    <property type="pathway name" value="Synthesis of active ubiquitin: roles of E1 and E2 enzymes"/>
</dbReference>
<dbReference type="Reactome" id="R-SCE-983168">
    <property type="pathway name" value="Antigen processing: Ubiquitination &amp; Proteasome degradation"/>
</dbReference>
<dbReference type="UniPathway" id="UPA00143"/>
<dbReference type="BioGRID-ORCS" id="851624">
    <property type="hits" value="9 hits in 10 CRISPR screens"/>
</dbReference>
<dbReference type="CD-CODE" id="876000F7">
    <property type="entry name" value="Centrosome"/>
</dbReference>
<dbReference type="PRO" id="PR:P14682"/>
<dbReference type="Proteomes" id="UP000002311">
    <property type="component" value="Chromosome IV"/>
</dbReference>
<dbReference type="RNAct" id="P14682">
    <property type="molecule type" value="protein"/>
</dbReference>
<dbReference type="GO" id="GO:0000781">
    <property type="term" value="C:chromosome, telomeric region"/>
    <property type="evidence" value="ECO:0007669"/>
    <property type="project" value="GOC"/>
</dbReference>
<dbReference type="GO" id="GO:0005737">
    <property type="term" value="C:cytoplasm"/>
    <property type="evidence" value="ECO:0000314"/>
    <property type="project" value="SGD"/>
</dbReference>
<dbReference type="GO" id="GO:0005634">
    <property type="term" value="C:nucleus"/>
    <property type="evidence" value="ECO:0000314"/>
    <property type="project" value="SGD"/>
</dbReference>
<dbReference type="GO" id="GO:0019005">
    <property type="term" value="C:SCF ubiquitin ligase complex"/>
    <property type="evidence" value="ECO:0000314"/>
    <property type="project" value="ComplexPortal"/>
</dbReference>
<dbReference type="GO" id="GO:0005524">
    <property type="term" value="F:ATP binding"/>
    <property type="evidence" value="ECO:0007669"/>
    <property type="project" value="UniProtKB-KW"/>
</dbReference>
<dbReference type="GO" id="GO:0061631">
    <property type="term" value="F:ubiquitin conjugating enzyme activity"/>
    <property type="evidence" value="ECO:0000318"/>
    <property type="project" value="GO_Central"/>
</dbReference>
<dbReference type="GO" id="GO:0004842">
    <property type="term" value="F:ubiquitin-protein transferase activity"/>
    <property type="evidence" value="ECO:0000314"/>
    <property type="project" value="SGD"/>
</dbReference>
<dbReference type="GO" id="GO:0051301">
    <property type="term" value="P:cell division"/>
    <property type="evidence" value="ECO:0007669"/>
    <property type="project" value="UniProtKB-KW"/>
</dbReference>
<dbReference type="GO" id="GO:0071406">
    <property type="term" value="P:cellular response to methylmercury"/>
    <property type="evidence" value="ECO:0000303"/>
    <property type="project" value="ComplexPortal"/>
</dbReference>
<dbReference type="GO" id="GO:0006260">
    <property type="term" value="P:DNA replication"/>
    <property type="evidence" value="ECO:0007669"/>
    <property type="project" value="UniProtKB-KW"/>
</dbReference>
<dbReference type="GO" id="GO:0000082">
    <property type="term" value="P:G1/S transition of mitotic cell cycle"/>
    <property type="evidence" value="ECO:0000314"/>
    <property type="project" value="ComplexPortal"/>
</dbReference>
<dbReference type="GO" id="GO:0000086">
    <property type="term" value="P:G2/M transition of mitotic cell cycle"/>
    <property type="evidence" value="ECO:0000316"/>
    <property type="project" value="SGD"/>
</dbReference>
<dbReference type="GO" id="GO:0008053">
    <property type="term" value="P:mitochondrial fusion"/>
    <property type="evidence" value="ECO:0000303"/>
    <property type="project" value="ComplexPortal"/>
</dbReference>
<dbReference type="GO" id="GO:0031573">
    <property type="term" value="P:mitotic intra-S DNA damage checkpoint signaling"/>
    <property type="evidence" value="ECO:0000303"/>
    <property type="project" value="ComplexPortal"/>
</dbReference>
<dbReference type="GO" id="GO:0010828">
    <property type="term" value="P:positive regulation of D-glucose transmembrane transport"/>
    <property type="evidence" value="ECO:0000314"/>
    <property type="project" value="ComplexPortal"/>
</dbReference>
<dbReference type="GO" id="GO:0043161">
    <property type="term" value="P:proteasome-mediated ubiquitin-dependent protein catabolic process"/>
    <property type="evidence" value="ECO:0000318"/>
    <property type="project" value="GO_Central"/>
</dbReference>
<dbReference type="GO" id="GO:0051865">
    <property type="term" value="P:protein autoubiquitination"/>
    <property type="evidence" value="ECO:0000314"/>
    <property type="project" value="SGD"/>
</dbReference>
<dbReference type="GO" id="GO:0000209">
    <property type="term" value="P:protein polyubiquitination"/>
    <property type="evidence" value="ECO:0000314"/>
    <property type="project" value="SGD"/>
</dbReference>
<dbReference type="GO" id="GO:0019222">
    <property type="term" value="P:regulation of metabolic process"/>
    <property type="evidence" value="ECO:0000303"/>
    <property type="project" value="ComplexPortal"/>
</dbReference>
<dbReference type="GO" id="GO:0007346">
    <property type="term" value="P:regulation of mitotic cell cycle"/>
    <property type="evidence" value="ECO:0000303"/>
    <property type="project" value="ComplexPortal"/>
</dbReference>
<dbReference type="GO" id="GO:0031335">
    <property type="term" value="P:regulation of sulfur amino acid metabolic process"/>
    <property type="evidence" value="ECO:0000303"/>
    <property type="project" value="ComplexPortal"/>
</dbReference>
<dbReference type="GO" id="GO:0000409">
    <property type="term" value="P:regulation of transcription by galactose"/>
    <property type="evidence" value="ECO:0000303"/>
    <property type="project" value="ComplexPortal"/>
</dbReference>
<dbReference type="GO" id="GO:0031146">
    <property type="term" value="P:SCF-dependent proteasomal ubiquitin-dependent protein catabolic process"/>
    <property type="evidence" value="ECO:0000314"/>
    <property type="project" value="SGD"/>
</dbReference>
<dbReference type="GO" id="GO:0030466">
    <property type="term" value="P:silent mating-type cassette heterochromatin formation"/>
    <property type="evidence" value="ECO:0000314"/>
    <property type="project" value="ComplexPortal"/>
</dbReference>
<dbReference type="GO" id="GO:0031509">
    <property type="term" value="P:subtelomeric heterochromatin formation"/>
    <property type="evidence" value="ECO:0000303"/>
    <property type="project" value="ComplexPortal"/>
</dbReference>
<dbReference type="GO" id="GO:0006511">
    <property type="term" value="P:ubiquitin-dependent protein catabolic process"/>
    <property type="evidence" value="ECO:0000314"/>
    <property type="project" value="ComplexPortal"/>
</dbReference>
<dbReference type="CDD" id="cd23811">
    <property type="entry name" value="UBCc_ScCDC34-like"/>
    <property type="match status" value="1"/>
</dbReference>
<dbReference type="FunFam" id="3.10.110.10:FF:000063">
    <property type="entry name" value="CDC34p Ubiquitin-conjugating enzyme (E2)"/>
    <property type="match status" value="1"/>
</dbReference>
<dbReference type="Gene3D" id="3.10.110.10">
    <property type="entry name" value="Ubiquitin Conjugating Enzyme"/>
    <property type="match status" value="1"/>
</dbReference>
<dbReference type="InterPro" id="IPR050113">
    <property type="entry name" value="Ub_conjugating_enzyme"/>
</dbReference>
<dbReference type="InterPro" id="IPR000608">
    <property type="entry name" value="UBQ-conjugat_E2_core"/>
</dbReference>
<dbReference type="InterPro" id="IPR023313">
    <property type="entry name" value="UBQ-conjugating_AS"/>
</dbReference>
<dbReference type="InterPro" id="IPR016135">
    <property type="entry name" value="UBQ-conjugating_enzyme/RWD"/>
</dbReference>
<dbReference type="PANTHER" id="PTHR24067">
    <property type="entry name" value="UBIQUITIN-CONJUGATING ENZYME E2"/>
    <property type="match status" value="1"/>
</dbReference>
<dbReference type="Pfam" id="PF00179">
    <property type="entry name" value="UQ_con"/>
    <property type="match status" value="1"/>
</dbReference>
<dbReference type="SMART" id="SM00212">
    <property type="entry name" value="UBCc"/>
    <property type="match status" value="1"/>
</dbReference>
<dbReference type="SUPFAM" id="SSF54495">
    <property type="entry name" value="UBC-like"/>
    <property type="match status" value="1"/>
</dbReference>
<dbReference type="PROSITE" id="PS00183">
    <property type="entry name" value="UBC_1"/>
    <property type="match status" value="1"/>
</dbReference>
<dbReference type="PROSITE" id="PS50127">
    <property type="entry name" value="UBC_2"/>
    <property type="match status" value="1"/>
</dbReference>
<gene>
    <name type="primary">CDC34</name>
    <name type="synonym">DNA6</name>
    <name type="synonym">UBC3</name>
    <name type="ordered locus">YDR054C</name>
    <name type="ORF">D4211</name>
    <name type="ORF">YD9609.08C</name>
</gene>
<sequence>MSSRKSTASSLLLRQYRELTDPKKAIPSFHIELEDDSNIFTWNIGVMVLNEDSIYHGGFFKAQMRFPEDFPFSPPQFRFTPAIYHPNVYRDGRLCISILHQSGDPMTDEPDAETWSPVQTVESVLISIVSLLEDPNINSPANVDAAVDYRKNPEQYKQRVKMEVERSKQDIPKGFIMPTSESAYISQSKLDEPESNKDMADNFWYDSDLDDDENGSVILQDDDYDDGNNHIPFEDDDVYNYNDNDDDDERIEFEDDDDDDDDSIDNDSVMDRKQPHKAEDESEDVEDVERVSKKI</sequence>
<keyword id="KW-0002">3D-structure</keyword>
<keyword id="KW-0067">ATP-binding</keyword>
<keyword id="KW-0131">Cell cycle</keyword>
<keyword id="KW-0132">Cell division</keyword>
<keyword id="KW-0963">Cytoplasm</keyword>
<keyword id="KW-0235">DNA replication</keyword>
<keyword id="KW-0547">Nucleotide-binding</keyword>
<keyword id="KW-0539">Nucleus</keyword>
<keyword id="KW-0597">Phosphoprotein</keyword>
<keyword id="KW-1185">Reference proteome</keyword>
<keyword id="KW-0808">Transferase</keyword>
<keyword id="KW-0833">Ubl conjugation pathway</keyword>
<accession>P14682</accession>
<accession>D6VS40</accession>
<reference key="1">
    <citation type="journal article" date="1988" name="Science">
        <title>The yeast cell cycle gene CDC34 encodes a ubiquitin-conjugating enzyme.</title>
        <authorList>
            <person name="Goebl M.G."/>
            <person name="Yochem J."/>
            <person name="Jentsch S."/>
            <person name="McGrath J.P."/>
            <person name="Varshavsky A."/>
            <person name="Byers B."/>
        </authorList>
    </citation>
    <scope>NUCLEOTIDE SEQUENCE [GENOMIC DNA]</scope>
    <scope>FUNCTION</scope>
</reference>
<reference key="2">
    <citation type="journal article" date="1996" name="Yeast">
        <title>Nucleotide sequence analysis of a 32,500 bp region of the right arm of Saccharomyces cerevisiae chromosome IV.</title>
        <authorList>
            <person name="Brandt P."/>
            <person name="Ramlow S."/>
            <person name="Otto B."/>
            <person name="Bloecker H."/>
        </authorList>
    </citation>
    <scope>NUCLEOTIDE SEQUENCE [GENOMIC DNA]</scope>
    <source>
        <strain>ATCC 204508 / S288c</strain>
    </source>
</reference>
<reference key="3">
    <citation type="journal article" date="1997" name="Nature">
        <title>The nucleotide sequence of Saccharomyces cerevisiae chromosome IV.</title>
        <authorList>
            <person name="Jacq C."/>
            <person name="Alt-Moerbe J."/>
            <person name="Andre B."/>
            <person name="Arnold W."/>
            <person name="Bahr A."/>
            <person name="Ballesta J.P.G."/>
            <person name="Bargues M."/>
            <person name="Baron L."/>
            <person name="Becker A."/>
            <person name="Biteau N."/>
            <person name="Bloecker H."/>
            <person name="Blugeon C."/>
            <person name="Boskovic J."/>
            <person name="Brandt P."/>
            <person name="Brueckner M."/>
            <person name="Buitrago M.J."/>
            <person name="Coster F."/>
            <person name="Delaveau T."/>
            <person name="del Rey F."/>
            <person name="Dujon B."/>
            <person name="Eide L.G."/>
            <person name="Garcia-Cantalejo J.M."/>
            <person name="Goffeau A."/>
            <person name="Gomez-Peris A."/>
            <person name="Granotier C."/>
            <person name="Hanemann V."/>
            <person name="Hankeln T."/>
            <person name="Hoheisel J.D."/>
            <person name="Jaeger W."/>
            <person name="Jimenez A."/>
            <person name="Jonniaux J.-L."/>
            <person name="Kraemer C."/>
            <person name="Kuester H."/>
            <person name="Laamanen P."/>
            <person name="Legros Y."/>
            <person name="Louis E.J."/>
            <person name="Moeller-Rieker S."/>
            <person name="Monnet A."/>
            <person name="Moro M."/>
            <person name="Mueller-Auer S."/>
            <person name="Nussbaumer B."/>
            <person name="Paricio N."/>
            <person name="Paulin L."/>
            <person name="Perea J."/>
            <person name="Perez-Alonso M."/>
            <person name="Perez-Ortin J.E."/>
            <person name="Pohl T.M."/>
            <person name="Prydz H."/>
            <person name="Purnelle B."/>
            <person name="Rasmussen S.W."/>
            <person name="Remacha M.A."/>
            <person name="Revuelta J.L."/>
            <person name="Rieger M."/>
            <person name="Salom D."/>
            <person name="Saluz H.P."/>
            <person name="Saiz J.E."/>
            <person name="Saren A.-M."/>
            <person name="Schaefer M."/>
            <person name="Scharfe M."/>
            <person name="Schmidt E.R."/>
            <person name="Schneider C."/>
            <person name="Scholler P."/>
            <person name="Schwarz S."/>
            <person name="Soler-Mira A."/>
            <person name="Urrestarazu L.A."/>
            <person name="Verhasselt P."/>
            <person name="Vissers S."/>
            <person name="Voet M."/>
            <person name="Volckaert G."/>
            <person name="Wagner G."/>
            <person name="Wambutt R."/>
            <person name="Wedler E."/>
            <person name="Wedler H."/>
            <person name="Woelfl S."/>
            <person name="Harris D.E."/>
            <person name="Bowman S."/>
            <person name="Brown D."/>
            <person name="Churcher C.M."/>
            <person name="Connor R."/>
            <person name="Dedman K."/>
            <person name="Gentles S."/>
            <person name="Hamlin N."/>
            <person name="Hunt S."/>
            <person name="Jones L."/>
            <person name="McDonald S."/>
            <person name="Murphy L.D."/>
            <person name="Niblett D."/>
            <person name="Odell C."/>
            <person name="Oliver K."/>
            <person name="Rajandream M.A."/>
            <person name="Richards C."/>
            <person name="Shore L."/>
            <person name="Walsh S.V."/>
            <person name="Barrell B.G."/>
            <person name="Dietrich F.S."/>
            <person name="Mulligan J.T."/>
            <person name="Allen E."/>
            <person name="Araujo R."/>
            <person name="Aviles E."/>
            <person name="Berno A."/>
            <person name="Carpenter J."/>
            <person name="Chen E."/>
            <person name="Cherry J.M."/>
            <person name="Chung E."/>
            <person name="Duncan M."/>
            <person name="Hunicke-Smith S."/>
            <person name="Hyman R.W."/>
            <person name="Komp C."/>
            <person name="Lashkari D."/>
            <person name="Lew H."/>
            <person name="Lin D."/>
            <person name="Mosedale D."/>
            <person name="Nakahara K."/>
            <person name="Namath A."/>
            <person name="Oefner P."/>
            <person name="Oh C."/>
            <person name="Petel F.X."/>
            <person name="Roberts D."/>
            <person name="Schramm S."/>
            <person name="Schroeder M."/>
            <person name="Shogren T."/>
            <person name="Shroff N."/>
            <person name="Winant A."/>
            <person name="Yelton M.A."/>
            <person name="Botstein D."/>
            <person name="Davis R.W."/>
            <person name="Johnston M."/>
            <person name="Andrews S."/>
            <person name="Brinkman R."/>
            <person name="Cooper J."/>
            <person name="Ding H."/>
            <person name="Du Z."/>
            <person name="Favello A."/>
            <person name="Fulton L."/>
            <person name="Gattung S."/>
            <person name="Greco T."/>
            <person name="Hallsworth K."/>
            <person name="Hawkins J."/>
            <person name="Hillier L.W."/>
            <person name="Jier M."/>
            <person name="Johnson D."/>
            <person name="Johnston L."/>
            <person name="Kirsten J."/>
            <person name="Kucaba T."/>
            <person name="Langston Y."/>
            <person name="Latreille P."/>
            <person name="Le T."/>
            <person name="Mardis E."/>
            <person name="Menezes S."/>
            <person name="Miller N."/>
            <person name="Nhan M."/>
            <person name="Pauley A."/>
            <person name="Peluso D."/>
            <person name="Rifkin L."/>
            <person name="Riles L."/>
            <person name="Taich A."/>
            <person name="Trevaskis E."/>
            <person name="Vignati D."/>
            <person name="Wilcox L."/>
            <person name="Wohldman P."/>
            <person name="Vaudin M."/>
            <person name="Wilson R."/>
            <person name="Waterston R."/>
            <person name="Albermann K."/>
            <person name="Hani J."/>
            <person name="Heumann K."/>
            <person name="Kleine K."/>
            <person name="Mewes H.-W."/>
            <person name="Zollner A."/>
            <person name="Zaccaria P."/>
        </authorList>
    </citation>
    <scope>NUCLEOTIDE SEQUENCE [LARGE SCALE GENOMIC DNA]</scope>
    <source>
        <strain>ATCC 204508 / S288c</strain>
    </source>
</reference>
<reference key="4">
    <citation type="journal article" date="2014" name="G3 (Bethesda)">
        <title>The reference genome sequence of Saccharomyces cerevisiae: Then and now.</title>
        <authorList>
            <person name="Engel S.R."/>
            <person name="Dietrich F.S."/>
            <person name="Fisk D.G."/>
            <person name="Binkley G."/>
            <person name="Balakrishnan R."/>
            <person name="Costanzo M.C."/>
            <person name="Dwight S.S."/>
            <person name="Hitz B.C."/>
            <person name="Karra K."/>
            <person name="Nash R.S."/>
            <person name="Weng S."/>
            <person name="Wong E.D."/>
            <person name="Lloyd P."/>
            <person name="Skrzypek M.S."/>
            <person name="Miyasato S.R."/>
            <person name="Simison M."/>
            <person name="Cherry J.M."/>
        </authorList>
    </citation>
    <scope>GENOME REANNOTATION</scope>
    <source>
        <strain>ATCC 204508 / S288c</strain>
    </source>
</reference>
<reference key="5">
    <citation type="journal article" date="1997" name="EMBO J.">
        <title>The Cdc4/34/53 pathway targets Cdc6p for proteolysis in budding yeast.</title>
        <authorList>
            <person name="Drury L.S."/>
            <person name="Perkins G."/>
            <person name="Diffley J.F."/>
        </authorList>
    </citation>
    <scope>FUNCTION</scope>
</reference>
<reference key="6">
    <citation type="journal article" date="1998" name="Genes Dev.">
        <title>Cdc53 is a scaffold protein for multiple Cdc34/Skp1/F-box protein complexes that regulate cell division and methionine biosynthesis in yeast.</title>
        <authorList>
            <person name="Patton E.E."/>
            <person name="Willems A.R."/>
            <person name="Sa D."/>
            <person name="Kuras L."/>
            <person name="Thomas D."/>
            <person name="Craig K.L."/>
            <person name="Tyers M."/>
        </authorList>
    </citation>
    <scope>FUNCTION</scope>
    <scope>SUBUNIT</scope>
</reference>
<reference key="7">
    <citation type="journal article" date="1999" name="Genes Dev.">
        <title>Cdc53/cullin and the essential Hrt1 RING-H2 subunit of SCF define a ubiquitin ligase module that activates the E2 enzyme Cdc34.</title>
        <authorList>
            <person name="Seol J.H."/>
            <person name="Feldman R.M.R."/>
            <person name="Zachariae W."/>
            <person name="Shevchenko A."/>
            <person name="Correll C.C."/>
            <person name="Lyapina S."/>
            <person name="Chi Y."/>
            <person name="Galova M."/>
            <person name="Claypool J."/>
            <person name="Sandmeyer S."/>
            <person name="Nasmyth K."/>
            <person name="Shevchenko A."/>
            <person name="Deshaies R.J."/>
        </authorList>
    </citation>
    <scope>INTERACTION WITH HRT1</scope>
</reference>
<reference key="8">
    <citation type="journal article" date="2003" name="Nature">
        <title>Global analysis of protein localization in budding yeast.</title>
        <authorList>
            <person name="Huh W.-K."/>
            <person name="Falvo J.V."/>
            <person name="Gerke L.C."/>
            <person name="Carroll A.S."/>
            <person name="Howson R.W."/>
            <person name="Weissman J.S."/>
            <person name="O'Shea E.K."/>
        </authorList>
    </citation>
    <scope>SUBCELLULAR LOCATION [LARGE SCALE ANALYSIS]</scope>
</reference>
<reference key="9">
    <citation type="journal article" date="2003" name="Nature">
        <title>Global analysis of protein expression in yeast.</title>
        <authorList>
            <person name="Ghaemmaghami S."/>
            <person name="Huh W.-K."/>
            <person name="Bower K."/>
            <person name="Howson R.W."/>
            <person name="Belle A."/>
            <person name="Dephoure N."/>
            <person name="O'Shea E.K."/>
            <person name="Weissman J.S."/>
        </authorList>
    </citation>
    <scope>LEVEL OF PROTEIN EXPRESSION [LARGE SCALE ANALYSIS]</scope>
</reference>
<reference key="10">
    <citation type="journal article" date="2008" name="Mol. Cell. Proteomics">
        <title>A multidimensional chromatography technology for in-depth phosphoproteome analysis.</title>
        <authorList>
            <person name="Albuquerque C.P."/>
            <person name="Smolka M.B."/>
            <person name="Payne S.H."/>
            <person name="Bafna V."/>
            <person name="Eng J."/>
            <person name="Zhou H."/>
        </authorList>
    </citation>
    <scope>PHOSPHORYLATION [LARGE SCALE ANALYSIS] AT SER-186 AND SER-292</scope>
    <scope>IDENTIFICATION BY MASS SPECTROMETRY [LARGE SCALE ANALYSIS]</scope>
</reference>
<reference key="11">
    <citation type="journal article" date="2009" name="Science">
        <title>Global analysis of Cdk1 substrate phosphorylation sites provides insights into evolution.</title>
        <authorList>
            <person name="Holt L.J."/>
            <person name="Tuch B.B."/>
            <person name="Villen J."/>
            <person name="Johnson A.D."/>
            <person name="Gygi S.P."/>
            <person name="Morgan D.O."/>
        </authorList>
    </citation>
    <scope>PHOSPHORYLATION [LARGE SCALE ANALYSIS] AT SER-282</scope>
    <scope>IDENTIFICATION BY MASS SPECTROMETRY [LARGE SCALE ANALYSIS]</scope>
</reference>
<proteinExistence type="evidence at protein level"/>
<organism>
    <name type="scientific">Saccharomyces cerevisiae (strain ATCC 204508 / S288c)</name>
    <name type="common">Baker's yeast</name>
    <dbReference type="NCBI Taxonomy" id="559292"/>
    <lineage>
        <taxon>Eukaryota</taxon>
        <taxon>Fungi</taxon>
        <taxon>Dikarya</taxon>
        <taxon>Ascomycota</taxon>
        <taxon>Saccharomycotina</taxon>
        <taxon>Saccharomycetes</taxon>
        <taxon>Saccharomycetales</taxon>
        <taxon>Saccharomycetaceae</taxon>
        <taxon>Saccharomyces</taxon>
    </lineage>
</organism>